<evidence type="ECO:0000255" key="1">
    <source>
        <dbReference type="HAMAP-Rule" id="MF_00537"/>
    </source>
</evidence>
<evidence type="ECO:0000305" key="2"/>
<name>RS14_SHIB3</name>
<dbReference type="EMBL" id="CP001063">
    <property type="protein sequence ID" value="ACD07567.1"/>
    <property type="molecule type" value="Genomic_DNA"/>
</dbReference>
<dbReference type="RefSeq" id="WP_001118930.1">
    <property type="nucleotide sequence ID" value="NC_010658.1"/>
</dbReference>
<dbReference type="SMR" id="B2U2S5"/>
<dbReference type="STRING" id="344609.SbBS512_E3692"/>
<dbReference type="GeneID" id="93778680"/>
<dbReference type="KEGG" id="sbc:SbBS512_E3692"/>
<dbReference type="HOGENOM" id="CLU_139869_0_1_6"/>
<dbReference type="Proteomes" id="UP000001030">
    <property type="component" value="Chromosome"/>
</dbReference>
<dbReference type="GO" id="GO:0005737">
    <property type="term" value="C:cytoplasm"/>
    <property type="evidence" value="ECO:0007669"/>
    <property type="project" value="UniProtKB-ARBA"/>
</dbReference>
<dbReference type="GO" id="GO:0015935">
    <property type="term" value="C:small ribosomal subunit"/>
    <property type="evidence" value="ECO:0007669"/>
    <property type="project" value="TreeGrafter"/>
</dbReference>
<dbReference type="GO" id="GO:0019843">
    <property type="term" value="F:rRNA binding"/>
    <property type="evidence" value="ECO:0007669"/>
    <property type="project" value="UniProtKB-UniRule"/>
</dbReference>
<dbReference type="GO" id="GO:0003735">
    <property type="term" value="F:structural constituent of ribosome"/>
    <property type="evidence" value="ECO:0007669"/>
    <property type="project" value="InterPro"/>
</dbReference>
<dbReference type="GO" id="GO:0006412">
    <property type="term" value="P:translation"/>
    <property type="evidence" value="ECO:0007669"/>
    <property type="project" value="UniProtKB-UniRule"/>
</dbReference>
<dbReference type="FunFam" id="1.10.287.1480:FF:000001">
    <property type="entry name" value="30S ribosomal protein S14"/>
    <property type="match status" value="1"/>
</dbReference>
<dbReference type="Gene3D" id="1.10.287.1480">
    <property type="match status" value="1"/>
</dbReference>
<dbReference type="HAMAP" id="MF_00537">
    <property type="entry name" value="Ribosomal_uS14_1"/>
    <property type="match status" value="1"/>
</dbReference>
<dbReference type="InterPro" id="IPR001209">
    <property type="entry name" value="Ribosomal_uS14"/>
</dbReference>
<dbReference type="InterPro" id="IPR023036">
    <property type="entry name" value="Ribosomal_uS14_bac/plastid"/>
</dbReference>
<dbReference type="InterPro" id="IPR018271">
    <property type="entry name" value="Ribosomal_uS14_CS"/>
</dbReference>
<dbReference type="NCBIfam" id="NF006477">
    <property type="entry name" value="PRK08881.1"/>
    <property type="match status" value="1"/>
</dbReference>
<dbReference type="PANTHER" id="PTHR19836">
    <property type="entry name" value="30S RIBOSOMAL PROTEIN S14"/>
    <property type="match status" value="1"/>
</dbReference>
<dbReference type="PANTHER" id="PTHR19836:SF19">
    <property type="entry name" value="SMALL RIBOSOMAL SUBUNIT PROTEIN US14M"/>
    <property type="match status" value="1"/>
</dbReference>
<dbReference type="Pfam" id="PF00253">
    <property type="entry name" value="Ribosomal_S14"/>
    <property type="match status" value="1"/>
</dbReference>
<dbReference type="SUPFAM" id="SSF57716">
    <property type="entry name" value="Glucocorticoid receptor-like (DNA-binding domain)"/>
    <property type="match status" value="1"/>
</dbReference>
<dbReference type="PROSITE" id="PS00527">
    <property type="entry name" value="RIBOSOMAL_S14"/>
    <property type="match status" value="1"/>
</dbReference>
<feature type="chain" id="PRO_1000128587" description="Small ribosomal subunit protein uS14">
    <location>
        <begin position="1"/>
        <end position="101"/>
    </location>
</feature>
<proteinExistence type="inferred from homology"/>
<keyword id="KW-1185">Reference proteome</keyword>
<keyword id="KW-0687">Ribonucleoprotein</keyword>
<keyword id="KW-0689">Ribosomal protein</keyword>
<keyword id="KW-0694">RNA-binding</keyword>
<keyword id="KW-0699">rRNA-binding</keyword>
<accession>B2U2S5</accession>
<sequence>MAKQSMKAREVKRVALADKYFAKRAELKAIISDVNASDEDRWNAVLKLQTLPRDSSPSRQRNRCRQTGRPHGFLRKFGLSRIKVREAAMRGEIPGLKKASW</sequence>
<reference key="1">
    <citation type="submission" date="2008-05" db="EMBL/GenBank/DDBJ databases">
        <title>Complete sequence of Shigella boydii serotype 18 strain BS512.</title>
        <authorList>
            <person name="Rasko D.A."/>
            <person name="Rosovitz M."/>
            <person name="Maurelli A.T."/>
            <person name="Myers G."/>
            <person name="Seshadri R."/>
            <person name="Cer R."/>
            <person name="Jiang L."/>
            <person name="Ravel J."/>
            <person name="Sebastian Y."/>
        </authorList>
    </citation>
    <scope>NUCLEOTIDE SEQUENCE [LARGE SCALE GENOMIC DNA]</scope>
    <source>
        <strain>CDC 3083-94 / BS512</strain>
    </source>
</reference>
<organism>
    <name type="scientific">Shigella boydii serotype 18 (strain CDC 3083-94 / BS512)</name>
    <dbReference type="NCBI Taxonomy" id="344609"/>
    <lineage>
        <taxon>Bacteria</taxon>
        <taxon>Pseudomonadati</taxon>
        <taxon>Pseudomonadota</taxon>
        <taxon>Gammaproteobacteria</taxon>
        <taxon>Enterobacterales</taxon>
        <taxon>Enterobacteriaceae</taxon>
        <taxon>Shigella</taxon>
    </lineage>
</organism>
<protein>
    <recommendedName>
        <fullName evidence="1">Small ribosomal subunit protein uS14</fullName>
    </recommendedName>
    <alternativeName>
        <fullName evidence="2">30S ribosomal protein S14</fullName>
    </alternativeName>
</protein>
<comment type="function">
    <text evidence="1">Binds 16S rRNA, required for the assembly of 30S particles and may also be responsible for determining the conformation of the 16S rRNA at the A site.</text>
</comment>
<comment type="subunit">
    <text evidence="1">Part of the 30S ribosomal subunit. Contacts proteins S3 and S10.</text>
</comment>
<comment type="similarity">
    <text evidence="1">Belongs to the universal ribosomal protein uS14 family.</text>
</comment>
<gene>
    <name evidence="1" type="primary">rpsN</name>
    <name type="ordered locus">SbBS512_E3692</name>
</gene>